<feature type="chain" id="PRO_0000339535" description="ATP synthase subunit beta">
    <location>
        <begin position="1"/>
        <end position="486"/>
    </location>
</feature>
<feature type="binding site" evidence="1">
    <location>
        <begin position="170"/>
        <end position="177"/>
    </location>
    <ligand>
        <name>ATP</name>
        <dbReference type="ChEBI" id="CHEBI:30616"/>
    </ligand>
</feature>
<accession>A6W7G9</accession>
<protein>
    <recommendedName>
        <fullName evidence="1">ATP synthase subunit beta</fullName>
        <ecNumber evidence="1">7.1.2.2</ecNumber>
    </recommendedName>
    <alternativeName>
        <fullName evidence="1">ATP synthase F1 sector subunit beta</fullName>
    </alternativeName>
    <alternativeName>
        <fullName evidence="1">F-ATPase subunit beta</fullName>
    </alternativeName>
</protein>
<dbReference type="EC" id="7.1.2.2" evidence="1"/>
<dbReference type="EMBL" id="CP000750">
    <property type="protein sequence ID" value="ABS02758.1"/>
    <property type="molecule type" value="Genomic_DNA"/>
</dbReference>
<dbReference type="RefSeq" id="WP_012084386.1">
    <property type="nucleotide sequence ID" value="NC_009664.2"/>
</dbReference>
<dbReference type="SMR" id="A6W7G9"/>
<dbReference type="STRING" id="266940.Krad_1270"/>
<dbReference type="KEGG" id="kra:Krad_1270"/>
<dbReference type="eggNOG" id="COG0055">
    <property type="taxonomic scope" value="Bacteria"/>
</dbReference>
<dbReference type="HOGENOM" id="CLU_022398_0_2_11"/>
<dbReference type="OrthoDB" id="9801639at2"/>
<dbReference type="Proteomes" id="UP000001116">
    <property type="component" value="Chromosome"/>
</dbReference>
<dbReference type="GO" id="GO:0005886">
    <property type="term" value="C:plasma membrane"/>
    <property type="evidence" value="ECO:0007669"/>
    <property type="project" value="UniProtKB-SubCell"/>
</dbReference>
<dbReference type="GO" id="GO:0045259">
    <property type="term" value="C:proton-transporting ATP synthase complex"/>
    <property type="evidence" value="ECO:0007669"/>
    <property type="project" value="UniProtKB-KW"/>
</dbReference>
<dbReference type="GO" id="GO:0005524">
    <property type="term" value="F:ATP binding"/>
    <property type="evidence" value="ECO:0007669"/>
    <property type="project" value="UniProtKB-UniRule"/>
</dbReference>
<dbReference type="GO" id="GO:0016887">
    <property type="term" value="F:ATP hydrolysis activity"/>
    <property type="evidence" value="ECO:0007669"/>
    <property type="project" value="InterPro"/>
</dbReference>
<dbReference type="GO" id="GO:0046933">
    <property type="term" value="F:proton-transporting ATP synthase activity, rotational mechanism"/>
    <property type="evidence" value="ECO:0007669"/>
    <property type="project" value="UniProtKB-UniRule"/>
</dbReference>
<dbReference type="CDD" id="cd18110">
    <property type="entry name" value="ATP-synt_F1_beta_C"/>
    <property type="match status" value="1"/>
</dbReference>
<dbReference type="CDD" id="cd18115">
    <property type="entry name" value="ATP-synt_F1_beta_N"/>
    <property type="match status" value="1"/>
</dbReference>
<dbReference type="CDD" id="cd01133">
    <property type="entry name" value="F1-ATPase_beta_CD"/>
    <property type="match status" value="1"/>
</dbReference>
<dbReference type="FunFam" id="1.10.1140.10:FF:000005">
    <property type="entry name" value="ATP synthase subunit beta"/>
    <property type="match status" value="1"/>
</dbReference>
<dbReference type="FunFam" id="2.40.10.170:FF:000005">
    <property type="entry name" value="ATP synthase subunit beta"/>
    <property type="match status" value="1"/>
</dbReference>
<dbReference type="FunFam" id="3.40.50.300:FF:000004">
    <property type="entry name" value="ATP synthase subunit beta"/>
    <property type="match status" value="1"/>
</dbReference>
<dbReference type="Gene3D" id="2.40.10.170">
    <property type="match status" value="1"/>
</dbReference>
<dbReference type="Gene3D" id="1.10.1140.10">
    <property type="entry name" value="Bovine Mitochondrial F1-atpase, Atp Synthase Beta Chain, Chain D, domain 3"/>
    <property type="match status" value="1"/>
</dbReference>
<dbReference type="Gene3D" id="3.40.50.300">
    <property type="entry name" value="P-loop containing nucleotide triphosphate hydrolases"/>
    <property type="match status" value="1"/>
</dbReference>
<dbReference type="HAMAP" id="MF_01347">
    <property type="entry name" value="ATP_synth_beta_bact"/>
    <property type="match status" value="1"/>
</dbReference>
<dbReference type="InterPro" id="IPR003593">
    <property type="entry name" value="AAA+_ATPase"/>
</dbReference>
<dbReference type="InterPro" id="IPR055190">
    <property type="entry name" value="ATP-synt_VA_C"/>
</dbReference>
<dbReference type="InterPro" id="IPR005722">
    <property type="entry name" value="ATP_synth_F1_bsu"/>
</dbReference>
<dbReference type="InterPro" id="IPR020003">
    <property type="entry name" value="ATPase_a/bsu_AS"/>
</dbReference>
<dbReference type="InterPro" id="IPR050053">
    <property type="entry name" value="ATPase_alpha/beta_chains"/>
</dbReference>
<dbReference type="InterPro" id="IPR004100">
    <property type="entry name" value="ATPase_F1/V1/A1_a/bsu_N"/>
</dbReference>
<dbReference type="InterPro" id="IPR036121">
    <property type="entry name" value="ATPase_F1/V1/A1_a/bsu_N_sf"/>
</dbReference>
<dbReference type="InterPro" id="IPR000194">
    <property type="entry name" value="ATPase_F1/V1/A1_a/bsu_nucl-bd"/>
</dbReference>
<dbReference type="InterPro" id="IPR024034">
    <property type="entry name" value="ATPase_F1/V1_b/a_C"/>
</dbReference>
<dbReference type="InterPro" id="IPR027417">
    <property type="entry name" value="P-loop_NTPase"/>
</dbReference>
<dbReference type="NCBIfam" id="TIGR01039">
    <property type="entry name" value="atpD"/>
    <property type="match status" value="1"/>
</dbReference>
<dbReference type="PANTHER" id="PTHR15184">
    <property type="entry name" value="ATP SYNTHASE"/>
    <property type="match status" value="1"/>
</dbReference>
<dbReference type="PANTHER" id="PTHR15184:SF71">
    <property type="entry name" value="ATP SYNTHASE SUBUNIT BETA, MITOCHONDRIAL"/>
    <property type="match status" value="1"/>
</dbReference>
<dbReference type="Pfam" id="PF00006">
    <property type="entry name" value="ATP-synt_ab"/>
    <property type="match status" value="1"/>
</dbReference>
<dbReference type="Pfam" id="PF02874">
    <property type="entry name" value="ATP-synt_ab_N"/>
    <property type="match status" value="1"/>
</dbReference>
<dbReference type="Pfam" id="PF22919">
    <property type="entry name" value="ATP-synt_VA_C"/>
    <property type="match status" value="1"/>
</dbReference>
<dbReference type="SMART" id="SM00382">
    <property type="entry name" value="AAA"/>
    <property type="match status" value="1"/>
</dbReference>
<dbReference type="SUPFAM" id="SSF47917">
    <property type="entry name" value="C-terminal domain of alpha and beta subunits of F1 ATP synthase"/>
    <property type="match status" value="1"/>
</dbReference>
<dbReference type="SUPFAM" id="SSF50615">
    <property type="entry name" value="N-terminal domain of alpha and beta subunits of F1 ATP synthase"/>
    <property type="match status" value="1"/>
</dbReference>
<dbReference type="SUPFAM" id="SSF52540">
    <property type="entry name" value="P-loop containing nucleoside triphosphate hydrolases"/>
    <property type="match status" value="1"/>
</dbReference>
<dbReference type="PROSITE" id="PS00152">
    <property type="entry name" value="ATPASE_ALPHA_BETA"/>
    <property type="match status" value="1"/>
</dbReference>
<organism>
    <name type="scientific">Kineococcus radiotolerans (strain ATCC BAA-149 / DSM 14245 / SRS30216)</name>
    <dbReference type="NCBI Taxonomy" id="266940"/>
    <lineage>
        <taxon>Bacteria</taxon>
        <taxon>Bacillati</taxon>
        <taxon>Actinomycetota</taxon>
        <taxon>Actinomycetes</taxon>
        <taxon>Kineosporiales</taxon>
        <taxon>Kineosporiaceae</taxon>
        <taxon>Kineococcus</taxon>
    </lineage>
</organism>
<proteinExistence type="inferred from homology"/>
<reference key="1">
    <citation type="journal article" date="2008" name="PLoS ONE">
        <title>Survival in nuclear waste, extreme resistance, and potential applications gleaned from the genome sequence of Kineococcus radiotolerans SRS30216.</title>
        <authorList>
            <person name="Bagwell C.E."/>
            <person name="Bhat S."/>
            <person name="Hawkins G.M."/>
            <person name="Smith B.W."/>
            <person name="Biswas T."/>
            <person name="Hoover T.R."/>
            <person name="Saunders E."/>
            <person name="Han C.S."/>
            <person name="Tsodikov O.V."/>
            <person name="Shimkets L.J."/>
        </authorList>
    </citation>
    <scope>NUCLEOTIDE SEQUENCE [LARGE SCALE GENOMIC DNA]</scope>
    <source>
        <strain>ATCC BAA-149 / DSM 14245 / SRS30216</strain>
    </source>
</reference>
<sequence length="486" mass="52667">MTATVNEAPASTSKGATGRIARVIGPVVDVEFSADTMPDQNNALTTQVTMGGTTQTVTLEVASHLGDNMVRAISLKPTDGMVRGAAVVDTGAPISVPVGNATLGHVFNAIGECLNLEEGEQLEVHERWPIHRKAPNFDQLESRTTMFETGIKVIDLLTPYVQGGKIGLFGGAGVGKTVLIQEMIQRVAQNHGGVSVFAGVGERTREGNDLIGEMAEAGVFDKTALVFGQMDEPPGTRLRVALSALTMAEYFRDVQNQDVLLFIDNIFRFTQAGSEVSTLLGRMPSAVGYQPTLADEMGVLQERITSTRGHSITSLQAIYVPADDYTDPAPATTFAHLDATTELSREIASRGLYPAVDPLTSTSRILDPLYIAQDHYDTAVRVKQILQRNKELQDIIAILGVDELSEEDKLTVSRARRIQQFLSQNTYMAEKFTGVEGSTVPLKETIEGFSKIADGELDHVAEQAFFNVGGLEDVERNWARIQKETA</sequence>
<name>ATPB_KINRD</name>
<evidence type="ECO:0000255" key="1">
    <source>
        <dbReference type="HAMAP-Rule" id="MF_01347"/>
    </source>
</evidence>
<comment type="function">
    <text evidence="1">Produces ATP from ADP in the presence of a proton gradient across the membrane. The catalytic sites are hosted primarily by the beta subunits.</text>
</comment>
<comment type="catalytic activity">
    <reaction evidence="1">
        <text>ATP + H2O + 4 H(+)(in) = ADP + phosphate + 5 H(+)(out)</text>
        <dbReference type="Rhea" id="RHEA:57720"/>
        <dbReference type="ChEBI" id="CHEBI:15377"/>
        <dbReference type="ChEBI" id="CHEBI:15378"/>
        <dbReference type="ChEBI" id="CHEBI:30616"/>
        <dbReference type="ChEBI" id="CHEBI:43474"/>
        <dbReference type="ChEBI" id="CHEBI:456216"/>
        <dbReference type="EC" id="7.1.2.2"/>
    </reaction>
</comment>
<comment type="subunit">
    <text evidence="1">F-type ATPases have 2 components, CF(1) - the catalytic core - and CF(0) - the membrane proton channel. CF(1) has five subunits: alpha(3), beta(3), gamma(1), delta(1), epsilon(1). CF(0) has three main subunits: a(1), b(2) and c(9-12). The alpha and beta chains form an alternating ring which encloses part of the gamma chain. CF(1) is attached to CF(0) by a central stalk formed by the gamma and epsilon chains, while a peripheral stalk is formed by the delta and b chains.</text>
</comment>
<comment type="subcellular location">
    <subcellularLocation>
        <location evidence="1">Cell membrane</location>
        <topology evidence="1">Peripheral membrane protein</topology>
    </subcellularLocation>
</comment>
<comment type="similarity">
    <text evidence="1">Belongs to the ATPase alpha/beta chains family.</text>
</comment>
<gene>
    <name evidence="1" type="primary">atpD</name>
    <name type="ordered locus">Krad_1270</name>
</gene>
<keyword id="KW-0066">ATP synthesis</keyword>
<keyword id="KW-0067">ATP-binding</keyword>
<keyword id="KW-1003">Cell membrane</keyword>
<keyword id="KW-0139">CF(1)</keyword>
<keyword id="KW-0375">Hydrogen ion transport</keyword>
<keyword id="KW-0406">Ion transport</keyword>
<keyword id="KW-0472">Membrane</keyword>
<keyword id="KW-0547">Nucleotide-binding</keyword>
<keyword id="KW-1185">Reference proteome</keyword>
<keyword id="KW-1278">Translocase</keyword>
<keyword id="KW-0813">Transport</keyword>